<name>MDTB_ECOHS</name>
<accession>A8A1U7</accession>
<keyword id="KW-0997">Cell inner membrane</keyword>
<keyword id="KW-1003">Cell membrane</keyword>
<keyword id="KW-0472">Membrane</keyword>
<keyword id="KW-0812">Transmembrane</keyword>
<keyword id="KW-1133">Transmembrane helix</keyword>
<keyword id="KW-0813">Transport</keyword>
<comment type="function">
    <text evidence="1">The MdtABC tripartite complex confers resistance against novobiocin and deoxycholate.</text>
</comment>
<comment type="subunit">
    <text evidence="1">Part of a tripartite efflux system composed of MdtA, MdtB and MdtC. MdtB forms a heteromultimer with MdtC.</text>
</comment>
<comment type="subcellular location">
    <subcellularLocation>
        <location evidence="1">Cell inner membrane</location>
        <topology evidence="1">Multi-pass membrane protein</topology>
    </subcellularLocation>
</comment>
<comment type="induction">
    <text>The mdtABC operon is transcriptionally activated by BaeR.</text>
</comment>
<comment type="similarity">
    <text evidence="1">Belongs to the resistance-nodulation-cell division (RND) (TC 2.A.6) family. MdtB subfamily.</text>
</comment>
<protein>
    <recommendedName>
        <fullName evidence="1">Multidrug resistance protein MdtB</fullName>
    </recommendedName>
    <alternativeName>
        <fullName evidence="1">Multidrug transporter MdtB</fullName>
    </alternativeName>
</protein>
<gene>
    <name evidence="1" type="primary">mdtB</name>
    <name type="ordered locus">EcHS_A2217</name>
</gene>
<feature type="chain" id="PRO_1000068503" description="Multidrug resistance protein MdtB">
    <location>
        <begin position="1"/>
        <end position="1040"/>
    </location>
</feature>
<feature type="transmembrane region" description="Helical" evidence="1">
    <location>
        <begin position="16"/>
        <end position="36"/>
    </location>
</feature>
<feature type="transmembrane region" description="Helical" evidence="1">
    <location>
        <begin position="347"/>
        <end position="367"/>
    </location>
</feature>
<feature type="transmembrane region" description="Helical" evidence="1">
    <location>
        <begin position="369"/>
        <end position="389"/>
    </location>
</feature>
<feature type="transmembrane region" description="Helical" evidence="1">
    <location>
        <begin position="396"/>
        <end position="416"/>
    </location>
</feature>
<feature type="transmembrane region" description="Helical" evidence="1">
    <location>
        <begin position="440"/>
        <end position="460"/>
    </location>
</feature>
<feature type="transmembrane region" description="Helical" evidence="1">
    <location>
        <begin position="472"/>
        <end position="492"/>
    </location>
</feature>
<feature type="transmembrane region" description="Helical" evidence="1">
    <location>
        <begin position="537"/>
        <end position="557"/>
    </location>
</feature>
<feature type="transmembrane region" description="Helical" evidence="1">
    <location>
        <begin position="863"/>
        <end position="883"/>
    </location>
</feature>
<feature type="transmembrane region" description="Helical" evidence="1">
    <location>
        <begin position="888"/>
        <end position="908"/>
    </location>
</feature>
<feature type="transmembrane region" description="Helical" evidence="1">
    <location>
        <begin position="911"/>
        <end position="931"/>
    </location>
</feature>
<feature type="transmembrane region" description="Helical" evidence="1">
    <location>
        <begin position="968"/>
        <end position="988"/>
    </location>
</feature>
<feature type="transmembrane region" description="Helical" evidence="1">
    <location>
        <begin position="998"/>
        <end position="1018"/>
    </location>
</feature>
<evidence type="ECO:0000255" key="1">
    <source>
        <dbReference type="HAMAP-Rule" id="MF_01423"/>
    </source>
</evidence>
<reference key="1">
    <citation type="journal article" date="2008" name="J. Bacteriol.">
        <title>The pangenome structure of Escherichia coli: comparative genomic analysis of E. coli commensal and pathogenic isolates.</title>
        <authorList>
            <person name="Rasko D.A."/>
            <person name="Rosovitz M.J."/>
            <person name="Myers G.S.A."/>
            <person name="Mongodin E.F."/>
            <person name="Fricke W.F."/>
            <person name="Gajer P."/>
            <person name="Crabtree J."/>
            <person name="Sebaihia M."/>
            <person name="Thomson N.R."/>
            <person name="Chaudhuri R."/>
            <person name="Henderson I.R."/>
            <person name="Sperandio V."/>
            <person name="Ravel J."/>
        </authorList>
    </citation>
    <scope>NUCLEOTIDE SEQUENCE [LARGE SCALE GENOMIC DNA]</scope>
    <source>
        <strain>HS</strain>
    </source>
</reference>
<sequence>MQVLPPSSTGGPSRLFIMRPVATTLLMVAILLAGIIGYRALPVSALPEVDYPTIQVVTLYPGASPDVMTSAVTAPLERQFGQMSGLKQMSSQSSGGASVITLQFQLTLPLDVAEQEVQAAINAATNLLPSDLPNPPVYSKVNPADPPIMTLAVTSIAMPMTQVEDMVETRVAQKISQISGVGLVTLSGGQRPAVRVKLNAQAIAALGLTSETVRTAITGANVNSAKGSLDGPSRAVTLSANDQMQSAEEYRQLIIAYQNGAPIRLGDVATVEQGAENSWLGAWANKEQAIVMNVQRQPGANIISTADSIRQMLPQLTESLPKSVKVTVLSDRTTNIRASVDDTQFELMMAIALVVMIIYLFLRNIPATIIPGVAVPLSLIGTFAVMVFLDFSINNLTLMALTIATGFVVDDAIVVIENISRYIEKGEKPLAAALKGAGEIGFTIISLTFSLIAVLIPLLFMGDIVGRLFREFAITLAVAILISAVVSLTLTPMMCARMLSQESLRKQNRFSRASEKMFDRIIAAYGRGLAKVLNHPWLTLSVALSTLLLSVLLWVFIPKGFFPVQDNGIIQGTLQAPQSSSFANMAQRQRQVADVILQDPAVQSLTSFVGVDGTNPSLNSARLQINLKPLDERDDRVQKVIARLQTAVDKVPGVDLFLQPTQDLTIDTQVSRTQYQFTLQATSLDALSTWVPQLMEKLQQLPQLSDVSSDWQDKGLVAYVNVDRDSASRLGISMADVDNALYNAFGQRLISTIYTQANQYRVVLEHNTENTPGLAALDTIRLTSSDGGVVPLSSIAKIEQRFAPLSINHLDQFPVTTISFNVPDNYSLGDAVQAIMDTEKTLNLPVDITTQFQGSTLAFQSALGSTVWLIVAAVVAMYIVLGILYESFIHPITILSTLPTAGVGALLALLIAGSELDVIAIIGIILLIGIVKKNAIMMIDFALAAEREQGMSPREAIYQACLLRFRPILMTTLAALLGALPLMLSTGVGAELRRPLGIGMVGGLIVSQVLTLFTTPVIYLLFDRLALWTKSRFARHEEEA</sequence>
<proteinExistence type="evidence at transcript level"/>
<dbReference type="EMBL" id="CP000802">
    <property type="protein sequence ID" value="ABV06501.1"/>
    <property type="molecule type" value="Genomic_DNA"/>
</dbReference>
<dbReference type="RefSeq" id="WP_001197829.1">
    <property type="nucleotide sequence ID" value="NC_009800.1"/>
</dbReference>
<dbReference type="SMR" id="A8A1U7"/>
<dbReference type="KEGG" id="ecx:EcHS_A2217"/>
<dbReference type="HOGENOM" id="CLU_002755_1_2_6"/>
<dbReference type="GO" id="GO:0005886">
    <property type="term" value="C:plasma membrane"/>
    <property type="evidence" value="ECO:0007669"/>
    <property type="project" value="UniProtKB-SubCell"/>
</dbReference>
<dbReference type="GO" id="GO:0042910">
    <property type="term" value="F:xenobiotic transmembrane transporter activity"/>
    <property type="evidence" value="ECO:0007669"/>
    <property type="project" value="TreeGrafter"/>
</dbReference>
<dbReference type="FunFam" id="1.20.1640.10:FF:000001">
    <property type="entry name" value="Efflux pump membrane transporter"/>
    <property type="match status" value="1"/>
</dbReference>
<dbReference type="FunFam" id="3.30.70.1430:FF:000001">
    <property type="entry name" value="Efflux pump membrane transporter"/>
    <property type="match status" value="1"/>
</dbReference>
<dbReference type="FunFam" id="3.30.2090.10:FF:000003">
    <property type="entry name" value="Multidrug resistance protein MdtB"/>
    <property type="match status" value="1"/>
</dbReference>
<dbReference type="FunFam" id="3.30.2090.10:FF:000006">
    <property type="entry name" value="Multidrug resistance protein MdtB"/>
    <property type="match status" value="1"/>
</dbReference>
<dbReference type="Gene3D" id="3.30.70.1430">
    <property type="entry name" value="Multidrug efflux transporter AcrB pore domain"/>
    <property type="match status" value="2"/>
</dbReference>
<dbReference type="Gene3D" id="3.30.70.1440">
    <property type="entry name" value="Multidrug efflux transporter AcrB pore domain"/>
    <property type="match status" value="1"/>
</dbReference>
<dbReference type="Gene3D" id="3.30.70.1320">
    <property type="entry name" value="Multidrug efflux transporter AcrB pore domain like"/>
    <property type="match status" value="1"/>
</dbReference>
<dbReference type="Gene3D" id="3.30.2090.10">
    <property type="entry name" value="Multidrug efflux transporter AcrB TolC docking domain, DN and DC subdomains"/>
    <property type="match status" value="2"/>
</dbReference>
<dbReference type="Gene3D" id="1.20.1640.10">
    <property type="entry name" value="Multidrug efflux transporter AcrB transmembrane domain"/>
    <property type="match status" value="2"/>
</dbReference>
<dbReference type="HAMAP" id="MF_01423">
    <property type="entry name" value="MdtB"/>
    <property type="match status" value="1"/>
</dbReference>
<dbReference type="InterPro" id="IPR027463">
    <property type="entry name" value="AcrB_DN_DC_subdom"/>
</dbReference>
<dbReference type="InterPro" id="IPR001036">
    <property type="entry name" value="Acrflvin-R"/>
</dbReference>
<dbReference type="InterPro" id="IPR022831">
    <property type="entry name" value="Multidrug-R_MdtB"/>
</dbReference>
<dbReference type="NCBIfam" id="NF007798">
    <property type="entry name" value="PRK10503.1"/>
    <property type="match status" value="1"/>
</dbReference>
<dbReference type="NCBIfam" id="NF033617">
    <property type="entry name" value="RND_permease_2"/>
    <property type="match status" value="1"/>
</dbReference>
<dbReference type="PANTHER" id="PTHR32063">
    <property type="match status" value="1"/>
</dbReference>
<dbReference type="PANTHER" id="PTHR32063:SF21">
    <property type="entry name" value="MULTIDRUG RESISTANCE PROTEIN MDTB"/>
    <property type="match status" value="1"/>
</dbReference>
<dbReference type="Pfam" id="PF00873">
    <property type="entry name" value="ACR_tran"/>
    <property type="match status" value="1"/>
</dbReference>
<dbReference type="PRINTS" id="PR00702">
    <property type="entry name" value="ACRIFLAVINRP"/>
</dbReference>
<dbReference type="SUPFAM" id="SSF82693">
    <property type="entry name" value="Multidrug efflux transporter AcrB pore domain, PN1, PN2, PC1 and PC2 subdomains"/>
    <property type="match status" value="3"/>
</dbReference>
<dbReference type="SUPFAM" id="SSF82714">
    <property type="entry name" value="Multidrug efflux transporter AcrB TolC docking domain, DN and DC subdomains"/>
    <property type="match status" value="2"/>
</dbReference>
<dbReference type="SUPFAM" id="SSF82866">
    <property type="entry name" value="Multidrug efflux transporter AcrB transmembrane domain"/>
    <property type="match status" value="2"/>
</dbReference>
<organism>
    <name type="scientific">Escherichia coli O9:H4 (strain HS)</name>
    <dbReference type="NCBI Taxonomy" id="331112"/>
    <lineage>
        <taxon>Bacteria</taxon>
        <taxon>Pseudomonadati</taxon>
        <taxon>Pseudomonadota</taxon>
        <taxon>Gammaproteobacteria</taxon>
        <taxon>Enterobacterales</taxon>
        <taxon>Enterobacteriaceae</taxon>
        <taxon>Escherichia</taxon>
    </lineage>
</organism>